<accession>Q2FE14</accession>
<comment type="subcellular location">
    <subcellularLocation>
        <location evidence="1">Cell membrane</location>
        <topology evidence="1">Lipid-anchor</topology>
    </subcellularLocation>
</comment>
<comment type="similarity">
    <text evidence="2">Belongs to the staphylococcal tandem lipoprotein family.</text>
</comment>
<comment type="sequence caution" evidence="2">
    <conflict type="erroneous initiation">
        <sequence resource="EMBL-CDS" id="ABD22528"/>
    </conflict>
</comment>
<dbReference type="EMBL" id="CP000255">
    <property type="protein sequence ID" value="ABD22528.1"/>
    <property type="status" value="ALT_INIT"/>
    <property type="molecule type" value="Genomic_DNA"/>
</dbReference>
<dbReference type="SMR" id="Q2FE14"/>
<dbReference type="KEGG" id="saa:SAUSA300_2430"/>
<dbReference type="HOGENOM" id="CLU_071589_0_1_9"/>
<dbReference type="OMA" id="NINRNTR"/>
<dbReference type="Proteomes" id="UP000001939">
    <property type="component" value="Chromosome"/>
</dbReference>
<dbReference type="GO" id="GO:0005886">
    <property type="term" value="C:plasma membrane"/>
    <property type="evidence" value="ECO:0007669"/>
    <property type="project" value="UniProtKB-SubCell"/>
</dbReference>
<dbReference type="Gene3D" id="2.50.20.40">
    <property type="match status" value="1"/>
</dbReference>
<dbReference type="InterPro" id="IPR007595">
    <property type="entry name" value="Csa"/>
</dbReference>
<dbReference type="InterPro" id="IPR038641">
    <property type="entry name" value="Csa_sf"/>
</dbReference>
<dbReference type="NCBIfam" id="TIGR01742">
    <property type="entry name" value="SA_tandem_lipo"/>
    <property type="match status" value="1"/>
</dbReference>
<dbReference type="Pfam" id="PF04507">
    <property type="entry name" value="DUF576"/>
    <property type="match status" value="1"/>
</dbReference>
<dbReference type="PROSITE" id="PS51257">
    <property type="entry name" value="PROKAR_LIPOPROTEIN"/>
    <property type="match status" value="1"/>
</dbReference>
<protein>
    <recommendedName>
        <fullName>Uncharacterized lipoprotein SAUSA300_2430</fullName>
    </recommendedName>
</protein>
<gene>
    <name type="ordered locus">SAUSA300_2430</name>
</gene>
<proteinExistence type="inferred from homology"/>
<sequence>MIHSKRLRLWLYLVLLAVFIGACGMKKEESSKDKQIKENFNKTLSLYPTKNLEDFYDKEGFRDQEFEKGDKGTWIIHSKMTIETNGKNMESRGLVLYVDRNTRTTKGEFIVRELWEDKKGYSRSKEKEYPVKMEHNKIIPTKPIADDKLRKEIENFKFFVQYGDFKDINDYKDGDISYNPNVPSYSAKYQLSNDDYNVKQLRKRYDIPTKKAPKLLIKGDGDLKGSSIGHKNLEFTFIENKEENIYFTDSINFKPTE</sequence>
<feature type="signal peptide" evidence="1">
    <location>
        <begin position="1"/>
        <end position="22"/>
    </location>
</feature>
<feature type="chain" id="PRO_0000282075" description="Uncharacterized lipoprotein SAUSA300_2430">
    <location>
        <begin position="23"/>
        <end position="257"/>
    </location>
</feature>
<feature type="lipid moiety-binding region" description="N-palmitoyl cysteine" evidence="1">
    <location>
        <position position="23"/>
    </location>
</feature>
<feature type="lipid moiety-binding region" description="S-diacylglycerol cysteine" evidence="1">
    <location>
        <position position="23"/>
    </location>
</feature>
<reference key="1">
    <citation type="journal article" date="2006" name="Lancet">
        <title>Complete genome sequence of USA300, an epidemic clone of community-acquired meticillin-resistant Staphylococcus aureus.</title>
        <authorList>
            <person name="Diep B.A."/>
            <person name="Gill S.R."/>
            <person name="Chang R.F."/>
            <person name="Phan T.H."/>
            <person name="Chen J.H."/>
            <person name="Davidson M.G."/>
            <person name="Lin F."/>
            <person name="Lin J."/>
            <person name="Carleton H.A."/>
            <person name="Mongodin E.F."/>
            <person name="Sensabaugh G.F."/>
            <person name="Perdreau-Remington F."/>
        </authorList>
    </citation>
    <scope>NUCLEOTIDE SEQUENCE [LARGE SCALE GENOMIC DNA]</scope>
    <source>
        <strain>USA300</strain>
    </source>
</reference>
<name>Y2430_STAA3</name>
<organism>
    <name type="scientific">Staphylococcus aureus (strain USA300)</name>
    <dbReference type="NCBI Taxonomy" id="367830"/>
    <lineage>
        <taxon>Bacteria</taxon>
        <taxon>Bacillati</taxon>
        <taxon>Bacillota</taxon>
        <taxon>Bacilli</taxon>
        <taxon>Bacillales</taxon>
        <taxon>Staphylococcaceae</taxon>
        <taxon>Staphylococcus</taxon>
    </lineage>
</organism>
<keyword id="KW-1003">Cell membrane</keyword>
<keyword id="KW-0449">Lipoprotein</keyword>
<keyword id="KW-0472">Membrane</keyword>
<keyword id="KW-0564">Palmitate</keyword>
<keyword id="KW-0732">Signal</keyword>
<evidence type="ECO:0000255" key="1">
    <source>
        <dbReference type="PROSITE-ProRule" id="PRU00303"/>
    </source>
</evidence>
<evidence type="ECO:0000305" key="2"/>